<accession>P36629</accession>
<accession>Q9UTU7</accession>
<proteinExistence type="evidence at protein level"/>
<dbReference type="EMBL" id="L22577">
    <property type="protein sequence ID" value="AAA03578.1"/>
    <property type="molecule type" value="Genomic_DNA"/>
</dbReference>
<dbReference type="EMBL" id="CU329671">
    <property type="protein sequence ID" value="CAB46760.1"/>
    <property type="molecule type" value="Genomic_DNA"/>
</dbReference>
<dbReference type="EMBL" id="AB027985">
    <property type="protein sequence ID" value="BAA87289.1"/>
    <property type="molecule type" value="Genomic_DNA"/>
</dbReference>
<dbReference type="PIR" id="A48250">
    <property type="entry name" value="A48250"/>
</dbReference>
<dbReference type="RefSeq" id="NP_595396.1">
    <property type="nucleotide sequence ID" value="NM_001021303.2"/>
</dbReference>
<dbReference type="PDB" id="4YH8">
    <property type="method" value="X-ray"/>
    <property type="resolution" value="1.70 A"/>
    <property type="chains" value="B=93-161"/>
</dbReference>
<dbReference type="PDB" id="7C06">
    <property type="method" value="X-ray"/>
    <property type="resolution" value="3.02 A"/>
    <property type="chains" value="B/E/H/K/N/Q/T/W/Z=93-161"/>
</dbReference>
<dbReference type="PDB" id="7C07">
    <property type="method" value="X-ray"/>
    <property type="resolution" value="3.20 A"/>
    <property type="chains" value="B/E/H/K/N/Q/T/W/Z=93-161"/>
</dbReference>
<dbReference type="PDB" id="7C08">
    <property type="method" value="X-ray"/>
    <property type="resolution" value="3.35 A"/>
    <property type="chains" value="B/E/H/K/N/Q/T/W/Z=93-161"/>
</dbReference>
<dbReference type="PDBsum" id="4YH8"/>
<dbReference type="PDBsum" id="7C06"/>
<dbReference type="PDBsum" id="7C07"/>
<dbReference type="PDBsum" id="7C08"/>
<dbReference type="SMR" id="P36629"/>
<dbReference type="BioGRID" id="276200">
    <property type="interactions" value="26"/>
</dbReference>
<dbReference type="FunCoup" id="P36629">
    <property type="interactions" value="675"/>
</dbReference>
<dbReference type="IntAct" id="P36629">
    <property type="interactions" value="3"/>
</dbReference>
<dbReference type="STRING" id="284812.P36629"/>
<dbReference type="iPTMnet" id="P36629"/>
<dbReference type="PaxDb" id="4896-SPBC146.07.1"/>
<dbReference type="EnsemblFungi" id="SPBC146.07.1">
    <property type="protein sequence ID" value="SPBC146.07.1:pep"/>
    <property type="gene ID" value="SPBC146.07"/>
</dbReference>
<dbReference type="GeneID" id="2539645"/>
<dbReference type="KEGG" id="spo:2539645"/>
<dbReference type="PomBase" id="SPBC146.07">
    <property type="gene designation" value="prp2"/>
</dbReference>
<dbReference type="VEuPathDB" id="FungiDB:SPBC146.07"/>
<dbReference type="eggNOG" id="KOG0120">
    <property type="taxonomic scope" value="Eukaryota"/>
</dbReference>
<dbReference type="HOGENOM" id="CLU_021795_2_0_1"/>
<dbReference type="InParanoid" id="P36629"/>
<dbReference type="OMA" id="MTQWDIK"/>
<dbReference type="PhylomeDB" id="P36629"/>
<dbReference type="EvolutionaryTrace" id="P36629"/>
<dbReference type="PRO" id="PR:P36629"/>
<dbReference type="Proteomes" id="UP000002485">
    <property type="component" value="Chromosome II"/>
</dbReference>
<dbReference type="GO" id="GO:0000243">
    <property type="term" value="C:commitment complex"/>
    <property type="evidence" value="ECO:0000314"/>
    <property type="project" value="PomBase"/>
</dbReference>
<dbReference type="GO" id="GO:0016607">
    <property type="term" value="C:nuclear speck"/>
    <property type="evidence" value="ECO:0000318"/>
    <property type="project" value="GO_Central"/>
</dbReference>
<dbReference type="GO" id="GO:0005634">
    <property type="term" value="C:nucleus"/>
    <property type="evidence" value="ECO:0000314"/>
    <property type="project" value="PomBase"/>
</dbReference>
<dbReference type="GO" id="GO:0005686">
    <property type="term" value="C:U2 snRNP"/>
    <property type="evidence" value="ECO:0000314"/>
    <property type="project" value="PomBase"/>
</dbReference>
<dbReference type="GO" id="GO:0071004">
    <property type="term" value="C:U2-type prespliceosome"/>
    <property type="evidence" value="ECO:0000314"/>
    <property type="project" value="PomBase"/>
</dbReference>
<dbReference type="GO" id="GO:0089701">
    <property type="term" value="C:U2AF complex"/>
    <property type="evidence" value="ECO:0000314"/>
    <property type="project" value="PomBase"/>
</dbReference>
<dbReference type="GO" id="GO:0003729">
    <property type="term" value="F:mRNA binding"/>
    <property type="evidence" value="ECO:0000250"/>
    <property type="project" value="PomBase"/>
</dbReference>
<dbReference type="GO" id="GO:0008187">
    <property type="term" value="F:poly-pyrimidine tract binding"/>
    <property type="evidence" value="ECO:0000318"/>
    <property type="project" value="GO_Central"/>
</dbReference>
<dbReference type="GO" id="GO:0030628">
    <property type="term" value="F:pre-mRNA 3'-splice site binding"/>
    <property type="evidence" value="ECO:0000318"/>
    <property type="project" value="GO_Central"/>
</dbReference>
<dbReference type="GO" id="GO:0045292">
    <property type="term" value="P:mRNA cis splicing, via spliceosome"/>
    <property type="evidence" value="ECO:0000315"/>
    <property type="project" value="PomBase"/>
</dbReference>
<dbReference type="GO" id="GO:0000245">
    <property type="term" value="P:spliceosomal complex assembly"/>
    <property type="evidence" value="ECO:0000315"/>
    <property type="project" value="PomBase"/>
</dbReference>
<dbReference type="CDD" id="cd12232">
    <property type="entry name" value="RRM3_U2AF65"/>
    <property type="match status" value="1"/>
</dbReference>
<dbReference type="FunFam" id="3.30.70.330:FF:000926">
    <property type="entry name" value="Ribonucleoprotein, PTB-binding 1"/>
    <property type="match status" value="1"/>
</dbReference>
<dbReference type="FunFam" id="3.30.70.330:FF:001667">
    <property type="entry name" value="Splicing factor U2AF 59 kDa subunit"/>
    <property type="match status" value="1"/>
</dbReference>
<dbReference type="Gene3D" id="3.30.70.330">
    <property type="match status" value="3"/>
</dbReference>
<dbReference type="InterPro" id="IPR012677">
    <property type="entry name" value="Nucleotide-bd_a/b_plait_sf"/>
</dbReference>
<dbReference type="InterPro" id="IPR035979">
    <property type="entry name" value="RBD_domain_sf"/>
</dbReference>
<dbReference type="InterPro" id="IPR000504">
    <property type="entry name" value="RRM_dom"/>
</dbReference>
<dbReference type="InterPro" id="IPR006529">
    <property type="entry name" value="U2AF_lg"/>
</dbReference>
<dbReference type="NCBIfam" id="TIGR01642">
    <property type="entry name" value="U2AF_lg"/>
    <property type="match status" value="1"/>
</dbReference>
<dbReference type="PANTHER" id="PTHR23139">
    <property type="entry name" value="RNA-BINDING PROTEIN"/>
    <property type="match status" value="1"/>
</dbReference>
<dbReference type="Pfam" id="PF00076">
    <property type="entry name" value="RRM_1"/>
    <property type="match status" value="2"/>
</dbReference>
<dbReference type="SMART" id="SM00360">
    <property type="entry name" value="RRM"/>
    <property type="match status" value="2"/>
</dbReference>
<dbReference type="SUPFAM" id="SSF54928">
    <property type="entry name" value="RNA-binding domain, RBD"/>
    <property type="match status" value="1"/>
</dbReference>
<dbReference type="PROSITE" id="PS50102">
    <property type="entry name" value="RRM"/>
    <property type="match status" value="2"/>
</dbReference>
<name>U2AF2_SCHPO</name>
<keyword id="KW-0002">3D-structure</keyword>
<keyword id="KW-0507">mRNA processing</keyword>
<keyword id="KW-0508">mRNA splicing</keyword>
<keyword id="KW-0539">Nucleus</keyword>
<keyword id="KW-1185">Reference proteome</keyword>
<keyword id="KW-0677">Repeat</keyword>
<keyword id="KW-0694">RNA-binding</keyword>
<comment type="function">
    <text evidence="5">Necessary for the splicing of pre-mRNA. The SF1-U2AF59-U2AF23 complex has a role in the recognition of the branch site (5'-UACUAAC-3'), the pyrimidine tract and the 3'-splice site at the 3'-end of introns.</text>
</comment>
<comment type="subunit">
    <text evidence="4 5">Forms a heterodimer with the U2AF small subunit. Can also form a homodimer. U2AF large subunit (U2AF59), U2AF small subunit (U2AF23) and SF1 (bpb1) interact to form a complex required for complex A formation. Interacts with wat1/pop3.</text>
</comment>
<comment type="interaction">
    <interactant intactId="EBI-1024157">
        <id>P36629</id>
    </interactant>
    <interactant intactId="EBI-1564139">
        <id>O74184</id>
        <label>pop3</label>
    </interactant>
    <organismsDiffer>false</organismsDiffer>
    <experiments>4</experiments>
</comment>
<comment type="subcellular location">
    <subcellularLocation>
        <location evidence="3">Nucleus</location>
    </subcellularLocation>
</comment>
<comment type="similarity">
    <text evidence="7">Belongs to the splicing factor SR family.</text>
</comment>
<protein>
    <recommendedName>
        <fullName>Splicing factor U2AF 59 kDa subunit</fullName>
    </recommendedName>
    <alternativeName>
        <fullName>U2 auxiliary factor 59 kDa subunit</fullName>
        <shortName>U2AF59</shortName>
    </alternativeName>
    <alternativeName>
        <fullName>U2 snRNP auxiliary factor large subunit</fullName>
    </alternativeName>
</protein>
<organism>
    <name type="scientific">Schizosaccharomyces pombe (strain 972 / ATCC 24843)</name>
    <name type="common">Fission yeast</name>
    <dbReference type="NCBI Taxonomy" id="284812"/>
    <lineage>
        <taxon>Eukaryota</taxon>
        <taxon>Fungi</taxon>
        <taxon>Dikarya</taxon>
        <taxon>Ascomycota</taxon>
        <taxon>Taphrinomycotina</taxon>
        <taxon>Schizosaccharomycetes</taxon>
        <taxon>Schizosaccharomycetales</taxon>
        <taxon>Schizosaccharomycetaceae</taxon>
        <taxon>Schizosaccharomyces</taxon>
    </lineage>
</organism>
<reference key="1">
    <citation type="journal article" date="1993" name="Science">
        <title>U2AF homolog required for splicing in vivo.</title>
        <authorList>
            <person name="Potashkin J."/>
            <person name="Naik K."/>
            <person name="Wentz-Hunter K."/>
        </authorList>
    </citation>
    <scope>NUCLEOTIDE SEQUENCE [GENOMIC DNA]</scope>
    <scope>MUTAGENESIS OF CYS-387</scope>
    <source>
        <strain>972 / ATCC 24843</strain>
    </source>
</reference>
<reference key="2">
    <citation type="journal article" date="2002" name="Nature">
        <title>The genome sequence of Schizosaccharomyces pombe.</title>
        <authorList>
            <person name="Wood V."/>
            <person name="Gwilliam R."/>
            <person name="Rajandream M.A."/>
            <person name="Lyne M.H."/>
            <person name="Lyne R."/>
            <person name="Stewart A."/>
            <person name="Sgouros J.G."/>
            <person name="Peat N."/>
            <person name="Hayles J."/>
            <person name="Baker S.G."/>
            <person name="Basham D."/>
            <person name="Bowman S."/>
            <person name="Brooks K."/>
            <person name="Brown D."/>
            <person name="Brown S."/>
            <person name="Chillingworth T."/>
            <person name="Churcher C.M."/>
            <person name="Collins M."/>
            <person name="Connor R."/>
            <person name="Cronin A."/>
            <person name="Davis P."/>
            <person name="Feltwell T."/>
            <person name="Fraser A."/>
            <person name="Gentles S."/>
            <person name="Goble A."/>
            <person name="Hamlin N."/>
            <person name="Harris D.E."/>
            <person name="Hidalgo J."/>
            <person name="Hodgson G."/>
            <person name="Holroyd S."/>
            <person name="Hornsby T."/>
            <person name="Howarth S."/>
            <person name="Huckle E.J."/>
            <person name="Hunt S."/>
            <person name="Jagels K."/>
            <person name="James K.D."/>
            <person name="Jones L."/>
            <person name="Jones M."/>
            <person name="Leather S."/>
            <person name="McDonald S."/>
            <person name="McLean J."/>
            <person name="Mooney P."/>
            <person name="Moule S."/>
            <person name="Mungall K.L."/>
            <person name="Murphy L.D."/>
            <person name="Niblett D."/>
            <person name="Odell C."/>
            <person name="Oliver K."/>
            <person name="O'Neil S."/>
            <person name="Pearson D."/>
            <person name="Quail M.A."/>
            <person name="Rabbinowitsch E."/>
            <person name="Rutherford K.M."/>
            <person name="Rutter S."/>
            <person name="Saunders D."/>
            <person name="Seeger K."/>
            <person name="Sharp S."/>
            <person name="Skelton J."/>
            <person name="Simmonds M.N."/>
            <person name="Squares R."/>
            <person name="Squares S."/>
            <person name="Stevens K."/>
            <person name="Taylor K."/>
            <person name="Taylor R.G."/>
            <person name="Tivey A."/>
            <person name="Walsh S.V."/>
            <person name="Warren T."/>
            <person name="Whitehead S."/>
            <person name="Woodward J.R."/>
            <person name="Volckaert G."/>
            <person name="Aert R."/>
            <person name="Robben J."/>
            <person name="Grymonprez B."/>
            <person name="Weltjens I."/>
            <person name="Vanstreels E."/>
            <person name="Rieger M."/>
            <person name="Schaefer M."/>
            <person name="Mueller-Auer S."/>
            <person name="Gabel C."/>
            <person name="Fuchs M."/>
            <person name="Duesterhoeft A."/>
            <person name="Fritzc C."/>
            <person name="Holzer E."/>
            <person name="Moestl D."/>
            <person name="Hilbert H."/>
            <person name="Borzym K."/>
            <person name="Langer I."/>
            <person name="Beck A."/>
            <person name="Lehrach H."/>
            <person name="Reinhardt R."/>
            <person name="Pohl T.M."/>
            <person name="Eger P."/>
            <person name="Zimmermann W."/>
            <person name="Wedler H."/>
            <person name="Wambutt R."/>
            <person name="Purnelle B."/>
            <person name="Goffeau A."/>
            <person name="Cadieu E."/>
            <person name="Dreano S."/>
            <person name="Gloux S."/>
            <person name="Lelaure V."/>
            <person name="Mottier S."/>
            <person name="Galibert F."/>
            <person name="Aves S.J."/>
            <person name="Xiang Z."/>
            <person name="Hunt C."/>
            <person name="Moore K."/>
            <person name="Hurst S.M."/>
            <person name="Lucas M."/>
            <person name="Rochet M."/>
            <person name="Gaillardin C."/>
            <person name="Tallada V.A."/>
            <person name="Garzon A."/>
            <person name="Thode G."/>
            <person name="Daga R.R."/>
            <person name="Cruzado L."/>
            <person name="Jimenez J."/>
            <person name="Sanchez M."/>
            <person name="del Rey F."/>
            <person name="Benito J."/>
            <person name="Dominguez A."/>
            <person name="Revuelta J.L."/>
            <person name="Moreno S."/>
            <person name="Armstrong J."/>
            <person name="Forsburg S.L."/>
            <person name="Cerutti L."/>
            <person name="Lowe T."/>
            <person name="McCombie W.R."/>
            <person name="Paulsen I."/>
            <person name="Potashkin J."/>
            <person name="Shpakovski G.V."/>
            <person name="Ussery D."/>
            <person name="Barrell B.G."/>
            <person name="Nurse P."/>
        </authorList>
    </citation>
    <scope>NUCLEOTIDE SEQUENCE [LARGE SCALE GENOMIC DNA]</scope>
    <source>
        <strain>972 / ATCC 24843</strain>
    </source>
</reference>
<reference key="3">
    <citation type="journal article" date="2000" name="Genes Cells">
        <title>Large-scale screening of intracellular protein localization in living fission yeast cells by the use of a GFP-fusion genomic DNA library.</title>
        <authorList>
            <person name="Ding D.-Q."/>
            <person name="Tomita Y."/>
            <person name="Yamamoto A."/>
            <person name="Chikashige Y."/>
            <person name="Haraguchi T."/>
            <person name="Hiraoka Y."/>
        </authorList>
    </citation>
    <scope>NUCLEOTIDE SEQUENCE [LARGE SCALE GENOMIC DNA] OF 1-168</scope>
    <scope>SUBCELLULAR LOCATION</scope>
    <source>
        <strain>ATCC 38364 / 968</strain>
    </source>
</reference>
<reference key="4">
    <citation type="journal article" date="1996" name="Nucleic Acids Res.">
        <title>The small subunit of the splicing factor U2AF is conserved in fission yeast.</title>
        <authorList>
            <person name="Wentz-Hunter K."/>
            <person name="Potashkin J."/>
        </authorList>
    </citation>
    <scope>IDENTIFICATION OF SMALL SUBUNIT BINDING DOMAIN</scope>
    <source>
        <strain>972 / ATCC 24843</strain>
    </source>
</reference>
<reference key="5">
    <citation type="journal article" date="2001" name="J. Cell Sci.">
        <title>Conserved Wat1/Pop3 WD-repeat protein of fission yeast secures genome stability through microtubule integrity and may be involved in mRNA maturation.</title>
        <authorList>
            <person name="Ochotorena I.L."/>
            <person name="Hirata D."/>
            <person name="Kominami K."/>
            <person name="Potashkin J."/>
            <person name="Sahin F."/>
            <person name="Wentz-Hunter K."/>
            <person name="Gould K.L."/>
            <person name="Sato K."/>
            <person name="Yoshida Y."/>
            <person name="Vardy L."/>
            <person name="Toda T."/>
        </authorList>
    </citation>
    <scope>INTERACTION WITH WAT1</scope>
    <source>
        <strain>972 / ATCC 24843</strain>
    </source>
</reference>
<reference key="6">
    <citation type="journal article" date="2002" name="EMBO J.">
        <title>Pre-spliceosome formation in S.pombe requires a stable complex of SF1-U2AF(59)-U2AF(23).</title>
        <authorList>
            <person name="Huang T."/>
            <person name="Vilardell J."/>
            <person name="Query C.C."/>
        </authorList>
    </citation>
    <scope>FUNCTION</scope>
    <scope>INTERACTION WITH U2AF23 AND SF1</scope>
</reference>
<evidence type="ECO:0000255" key="1">
    <source>
        <dbReference type="PROSITE-ProRule" id="PRU00176"/>
    </source>
</evidence>
<evidence type="ECO:0000256" key="2">
    <source>
        <dbReference type="SAM" id="MobiDB-lite"/>
    </source>
</evidence>
<evidence type="ECO:0000269" key="3">
    <source>
    </source>
</evidence>
<evidence type="ECO:0000269" key="4">
    <source>
    </source>
</evidence>
<evidence type="ECO:0000269" key="5">
    <source>
    </source>
</evidence>
<evidence type="ECO:0000269" key="6">
    <source>
    </source>
</evidence>
<evidence type="ECO:0000305" key="7"/>
<evidence type="ECO:0007829" key="8">
    <source>
        <dbReference type="PDB" id="4YH8"/>
    </source>
</evidence>
<evidence type="ECO:0007829" key="9">
    <source>
        <dbReference type="PDB" id="7C07"/>
    </source>
</evidence>
<evidence type="ECO:0007829" key="10">
    <source>
        <dbReference type="PDB" id="7C08"/>
    </source>
</evidence>
<sequence length="517" mass="58933">MDLSSRLSSGSSRIPKRHRDYRDEEPRRERGSGGIGREDPRGHYGSERPRRRRRDESDFRRHRESRERSYREDERPRRERRYDDYEPRSLRYSSVGRSRSPPPSRERSVRSIEQELEQLRDVTPINQWKRKRSLWDIKPPGYELVTADQAKMSGVFPLPGAPRAAVTDPEKLLEFARSAEGSIIAPPPPLQPGASRQARRLVVTGIPNEFVEDAFVSFIEDLFISTTYHKPETKHFSSVNVCKEENFAILEVATPEDATFLWGLQSESYSNDVFLKFQRIQNYIVPQITPEVSQKRSDDYAKNDVLDSKDKIYISNLPLNLGEDQVVELLKPFGDLLSFQLIKNIADGSSKGFCFCEFKNPSDAEVAISGLDGKDTYGNKLHAQFACVGLNQAMIDKSNGMAILTELAKASSQSIPTRVLQLHNLITGDEIMDVQEYEDIYESVKTQFSNYGPLIDIKIPRSIGTRNSGLGTGKVFVRYSDIRSAEVAMEEMKGCKFNDRTIVIAFYGEDCYKANAW</sequence>
<feature type="chain" id="PRO_0000081993" description="Splicing factor U2AF 59 kDa subunit">
    <location>
        <begin position="1"/>
        <end position="517"/>
    </location>
</feature>
<feature type="domain" description="RRM 1" evidence="1">
    <location>
        <begin position="310"/>
        <end position="388"/>
    </location>
</feature>
<feature type="domain" description="RRM 2" evidence="1">
    <location>
        <begin position="418"/>
        <end position="509"/>
    </location>
</feature>
<feature type="region of interest" description="Disordered" evidence="2">
    <location>
        <begin position="1"/>
        <end position="112"/>
    </location>
</feature>
<feature type="compositionally biased region" description="Low complexity" evidence="2">
    <location>
        <begin position="1"/>
        <end position="13"/>
    </location>
</feature>
<feature type="compositionally biased region" description="Basic and acidic residues" evidence="2">
    <location>
        <begin position="20"/>
        <end position="89"/>
    </location>
</feature>
<feature type="mutagenesis site" description="Temperature-sensitive." evidence="6">
    <original>C</original>
    <variation>Y</variation>
    <location>
        <position position="387"/>
    </location>
</feature>
<feature type="helix" evidence="8">
    <location>
        <begin position="108"/>
        <end position="118"/>
    </location>
</feature>
<feature type="turn" evidence="8">
    <location>
        <begin position="119"/>
        <end position="121"/>
    </location>
</feature>
<feature type="helix" evidence="8">
    <location>
        <begin position="125"/>
        <end position="127"/>
    </location>
</feature>
<feature type="turn" evidence="9">
    <location>
        <begin position="140"/>
        <end position="143"/>
    </location>
</feature>
<feature type="helix" evidence="8">
    <location>
        <begin position="147"/>
        <end position="152"/>
    </location>
</feature>
<feature type="strand" evidence="10">
    <location>
        <begin position="154"/>
        <end position="156"/>
    </location>
</feature>
<gene>
    <name type="primary">prp2</name>
    <name type="synonym">mis11</name>
    <name type="ORF">SPBC146.07</name>
</gene>